<accession>B1LD41</accession>
<gene>
    <name evidence="1" type="primary">proQ</name>
    <name type="ordered locus">EcSMS35_1356</name>
</gene>
<keyword id="KW-0143">Chaperone</keyword>
<keyword id="KW-0963">Cytoplasm</keyword>
<keyword id="KW-0694">RNA-binding</keyword>
<proteinExistence type="inferred from homology"/>
<dbReference type="EMBL" id="CP000970">
    <property type="protein sequence ID" value="ACB18791.1"/>
    <property type="molecule type" value="Genomic_DNA"/>
</dbReference>
<dbReference type="RefSeq" id="WP_000431370.1">
    <property type="nucleotide sequence ID" value="NC_010498.1"/>
</dbReference>
<dbReference type="SMR" id="B1LD41"/>
<dbReference type="GeneID" id="93776081"/>
<dbReference type="KEGG" id="ecm:EcSMS35_1356"/>
<dbReference type="HOGENOM" id="CLU_113254_0_0_6"/>
<dbReference type="Proteomes" id="UP000007011">
    <property type="component" value="Chromosome"/>
</dbReference>
<dbReference type="GO" id="GO:0005829">
    <property type="term" value="C:cytosol"/>
    <property type="evidence" value="ECO:0007669"/>
    <property type="project" value="TreeGrafter"/>
</dbReference>
<dbReference type="GO" id="GO:0033592">
    <property type="term" value="F:RNA strand annealing activity"/>
    <property type="evidence" value="ECO:0007669"/>
    <property type="project" value="UniProtKB-UniRule"/>
</dbReference>
<dbReference type="GO" id="GO:0034057">
    <property type="term" value="F:RNA strand-exchange activity"/>
    <property type="evidence" value="ECO:0007669"/>
    <property type="project" value="UniProtKB-UniRule"/>
</dbReference>
<dbReference type="GO" id="GO:0010608">
    <property type="term" value="P:post-transcriptional regulation of gene expression"/>
    <property type="evidence" value="ECO:0007669"/>
    <property type="project" value="InterPro"/>
</dbReference>
<dbReference type="FunFam" id="1.10.1710.10:FF:000001">
    <property type="entry name" value="RNA chaperone ProQ"/>
    <property type="match status" value="1"/>
</dbReference>
<dbReference type="Gene3D" id="1.10.1710.10">
    <property type="entry name" value="ProQ/FinO domain"/>
    <property type="match status" value="1"/>
</dbReference>
<dbReference type="HAMAP" id="MF_00749">
    <property type="entry name" value="ProQ"/>
    <property type="match status" value="1"/>
</dbReference>
<dbReference type="InterPro" id="IPR023529">
    <property type="entry name" value="ProQ"/>
</dbReference>
<dbReference type="InterPro" id="IPR016103">
    <property type="entry name" value="ProQ/FinO"/>
</dbReference>
<dbReference type="InterPro" id="IPR036442">
    <property type="entry name" value="ProQ/FinO_sf"/>
</dbReference>
<dbReference type="InterPro" id="IPR035236">
    <property type="entry name" value="ProQ_C"/>
</dbReference>
<dbReference type="NCBIfam" id="NF003434">
    <property type="entry name" value="PRK04950.1"/>
    <property type="match status" value="1"/>
</dbReference>
<dbReference type="PANTHER" id="PTHR38106">
    <property type="entry name" value="RNA CHAPERONE PROQ"/>
    <property type="match status" value="1"/>
</dbReference>
<dbReference type="PANTHER" id="PTHR38106:SF1">
    <property type="entry name" value="RNA CHAPERONE PROQ"/>
    <property type="match status" value="1"/>
</dbReference>
<dbReference type="Pfam" id="PF04352">
    <property type="entry name" value="ProQ"/>
    <property type="match status" value="1"/>
</dbReference>
<dbReference type="Pfam" id="PF17516">
    <property type="entry name" value="ProQ_C"/>
    <property type="match status" value="1"/>
</dbReference>
<dbReference type="SMART" id="SM00945">
    <property type="entry name" value="ProQ"/>
    <property type="match status" value="1"/>
</dbReference>
<dbReference type="SUPFAM" id="SSF48657">
    <property type="entry name" value="FinO-like"/>
    <property type="match status" value="1"/>
</dbReference>
<reference key="1">
    <citation type="journal article" date="2008" name="J. Bacteriol.">
        <title>Insights into the environmental resistance gene pool from the genome sequence of the multidrug-resistant environmental isolate Escherichia coli SMS-3-5.</title>
        <authorList>
            <person name="Fricke W.F."/>
            <person name="Wright M.S."/>
            <person name="Lindell A.H."/>
            <person name="Harkins D.M."/>
            <person name="Baker-Austin C."/>
            <person name="Ravel J."/>
            <person name="Stepanauskas R."/>
        </authorList>
    </citation>
    <scope>NUCLEOTIDE SEQUENCE [LARGE SCALE GENOMIC DNA]</scope>
    <source>
        <strain>SMS-3-5 / SECEC</strain>
    </source>
</reference>
<name>PROQ_ECOSM</name>
<organism>
    <name type="scientific">Escherichia coli (strain SMS-3-5 / SECEC)</name>
    <dbReference type="NCBI Taxonomy" id="439855"/>
    <lineage>
        <taxon>Bacteria</taxon>
        <taxon>Pseudomonadati</taxon>
        <taxon>Pseudomonadota</taxon>
        <taxon>Gammaproteobacteria</taxon>
        <taxon>Enterobacterales</taxon>
        <taxon>Enterobacteriaceae</taxon>
        <taxon>Escherichia</taxon>
    </lineage>
</organism>
<evidence type="ECO:0000255" key="1">
    <source>
        <dbReference type="HAMAP-Rule" id="MF_00749"/>
    </source>
</evidence>
<evidence type="ECO:0000256" key="2">
    <source>
        <dbReference type="SAM" id="MobiDB-lite"/>
    </source>
</evidence>
<sequence>MENQPKLNSSKEVIAFLAERFPHCFSAEGEARPLKIGIFQDLVDRVAGEMNLSKTQLRSALRLYTSSWRYLYGVKPGATRVDLDGNPCGELDEQHVEHARKQLEEAKARVQAQRAEQQAKKREAAAAAGEKEDAPRRERKPRPTTPRRKEGAERKPRAQKPVEKAPKTVKAPREEQHTPVSDISALTVGQALKVKAGQNAMDATVLEITKDGVRVQLNSGMSLIVRAEHLVF</sequence>
<feature type="chain" id="PRO_1000133296" description="RNA chaperone ProQ">
    <location>
        <begin position="1"/>
        <end position="232"/>
    </location>
</feature>
<feature type="region of interest" description="Disordered" evidence="2">
    <location>
        <begin position="105"/>
        <end position="182"/>
    </location>
</feature>
<feature type="compositionally biased region" description="Basic and acidic residues" evidence="2">
    <location>
        <begin position="117"/>
        <end position="136"/>
    </location>
</feature>
<feature type="compositionally biased region" description="Basic residues" evidence="2">
    <location>
        <begin position="137"/>
        <end position="146"/>
    </location>
</feature>
<feature type="compositionally biased region" description="Basic and acidic residues" evidence="2">
    <location>
        <begin position="147"/>
        <end position="177"/>
    </location>
</feature>
<protein>
    <recommendedName>
        <fullName evidence="1">RNA chaperone ProQ</fullName>
    </recommendedName>
</protein>
<comment type="function">
    <text evidence="1">RNA chaperone with significant RNA binding, RNA strand exchange and RNA duplexing activities. May regulate ProP activity through an RNA-based, post-transcriptional mechanism.</text>
</comment>
<comment type="subcellular location">
    <subcellularLocation>
        <location evidence="1">Cytoplasm</location>
    </subcellularLocation>
</comment>
<comment type="similarity">
    <text evidence="1">Belongs to the ProQ family.</text>
</comment>